<gene>
    <name type="ordered locus">Tmel_0533</name>
</gene>
<evidence type="ECO:0000303" key="1">
    <source>
    </source>
</evidence>
<evidence type="ECO:0000305" key="2"/>
<evidence type="ECO:0000305" key="3">
    <source>
    </source>
</evidence>
<keyword id="KW-0328">Glycosyltransferase</keyword>
<keyword id="KW-0808">Transferase</keyword>
<organism>
    <name type="scientific">Thermosipho melanesiensis (strain DSM 12029 / CIP 104789 / BI429)</name>
    <dbReference type="NCBI Taxonomy" id="391009"/>
    <lineage>
        <taxon>Bacteria</taxon>
        <taxon>Thermotogati</taxon>
        <taxon>Thermotogota</taxon>
        <taxon>Thermotogae</taxon>
        <taxon>Thermotogales</taxon>
        <taxon>Fervidobacteriaceae</taxon>
        <taxon>Thermosipho</taxon>
    </lineage>
</organism>
<protein>
    <recommendedName>
        <fullName evidence="1">Probable sucrose-phosphate synthase</fullName>
        <shortName evidence="1">psTm</shortName>
        <ecNumber>2.4.1.14</ecNumber>
    </recommendedName>
</protein>
<accession>A6LKE9</accession>
<dbReference type="EC" id="2.4.1.14"/>
<dbReference type="EMBL" id="CP000716">
    <property type="protein sequence ID" value="ABR30400.1"/>
    <property type="molecule type" value="Genomic_DNA"/>
</dbReference>
<dbReference type="RefSeq" id="WP_012056761.1">
    <property type="nucleotide sequence ID" value="NC_009616.1"/>
</dbReference>
<dbReference type="SMR" id="A6LKE9"/>
<dbReference type="STRING" id="391009.Tmel_0533"/>
<dbReference type="CAZy" id="GT4">
    <property type="family name" value="Glycosyltransferase Family 4"/>
</dbReference>
<dbReference type="KEGG" id="tme:Tmel_0533"/>
<dbReference type="eggNOG" id="COG0438">
    <property type="taxonomic scope" value="Bacteria"/>
</dbReference>
<dbReference type="HOGENOM" id="CLU_009583_24_2_0"/>
<dbReference type="OrthoDB" id="9795068at2"/>
<dbReference type="Proteomes" id="UP000001110">
    <property type="component" value="Chromosome"/>
</dbReference>
<dbReference type="GO" id="GO:0046524">
    <property type="term" value="F:sucrose-phosphate synthase activity"/>
    <property type="evidence" value="ECO:0007669"/>
    <property type="project" value="UniProtKB-EC"/>
</dbReference>
<dbReference type="Gene3D" id="3.40.50.2000">
    <property type="entry name" value="Glycogen Phosphorylase B"/>
    <property type="match status" value="2"/>
</dbReference>
<dbReference type="InterPro" id="IPR001296">
    <property type="entry name" value="Glyco_trans_1"/>
</dbReference>
<dbReference type="InterPro" id="IPR044161">
    <property type="entry name" value="SPS"/>
</dbReference>
<dbReference type="InterPro" id="IPR000368">
    <property type="entry name" value="Sucrose_synth_GT-B1"/>
</dbReference>
<dbReference type="PANTHER" id="PTHR46039">
    <property type="entry name" value="SUCROSE-PHOSPHATE SYNTHASE 3-RELATED"/>
    <property type="match status" value="1"/>
</dbReference>
<dbReference type="PANTHER" id="PTHR46039:SF5">
    <property type="entry name" value="SUCROSE-PHOSPHATE SYNTHASE 3-RELATED"/>
    <property type="match status" value="1"/>
</dbReference>
<dbReference type="Pfam" id="PF00534">
    <property type="entry name" value="Glycos_transf_1"/>
    <property type="match status" value="1"/>
</dbReference>
<dbReference type="Pfam" id="PF00862">
    <property type="entry name" value="GT-B_Sucrose_synth"/>
    <property type="match status" value="1"/>
</dbReference>
<dbReference type="SUPFAM" id="SSF53756">
    <property type="entry name" value="UDP-Glycosyltransferase/glycogen phosphorylase"/>
    <property type="match status" value="1"/>
</dbReference>
<name>SPS_THEM4</name>
<sequence>MKIAFFNPQGNFDKKDSHLTEHPDFGGQLIYVKELAKAMGKMGNKVDIITRKIIDKKWPEFSGDFDYYPDAENVRIVRIAFGGDKFLNKERLWDFLGEYVKNIYRFYQKEGFPDFVTTHYGDGGIAGAMFKKLTHIPYSFTAHSLGAQKKDKFKNAKDAEERYRFSIRISAEKVAMKYASFIVTSTQQEKEEQYSHNEYIDVYPEIKDKIFVIPPGVNTNIFYPDDTDEYKFSKLPIIVSSRLDPKKNIEFVIESFNKYLKDGFELIIVLRKKPEEYTGYERQLIEKAKKAKGKFLVITSQKELAKLYNSAAKHRGIFALTSHYEPFGLAIIEAMACKLPVISTRNGGPVEILDNGKYGHLVSTHEEFKEAALKIKDNYEKLSEESYKRVMEKYTWERCAKEYLNLIEKENVILPEFFEKQMG</sequence>
<reference key="1">
    <citation type="submission" date="2007-05" db="EMBL/GenBank/DDBJ databases">
        <title>Complete sequence of Thermosipho melanesiensis BI429.</title>
        <authorList>
            <consortium name="US DOE Joint Genome Institute"/>
            <person name="Copeland A."/>
            <person name="Lucas S."/>
            <person name="Lapidus A."/>
            <person name="Barry K."/>
            <person name="Glavina del Rio T."/>
            <person name="Dalin E."/>
            <person name="Tice H."/>
            <person name="Pitluck S."/>
            <person name="Chertkov O."/>
            <person name="Brettin T."/>
            <person name="Bruce D."/>
            <person name="Detter J.C."/>
            <person name="Han C."/>
            <person name="Schmutz J."/>
            <person name="Larimer F."/>
            <person name="Land M."/>
            <person name="Hauser L."/>
            <person name="Kyrpides N."/>
            <person name="Mikhailova N."/>
            <person name="Nelson K."/>
            <person name="Gogarten J.P."/>
            <person name="Noll K."/>
            <person name="Richardson P."/>
        </authorList>
    </citation>
    <scope>NUCLEOTIDE SEQUENCE [LARGE SCALE GENOMIC DNA]</scope>
    <source>
        <strain>DSM 12029 / CIP 104789 / BI429</strain>
    </source>
</reference>
<reference key="2">
    <citation type="journal article" date="2015" name="Appl. Microbiol. Biotechnol.">
        <title>Identification of sucrose synthase in nonphotosynthetic bacteria and characterization of the recombinant enzymes.</title>
        <authorList>
            <person name="Diricks M."/>
            <person name="De Bruyn F."/>
            <person name="Van Daele P."/>
            <person name="Walmagh M."/>
            <person name="Desmet T."/>
        </authorList>
    </citation>
    <scope>PROBABLE FUNCTION</scope>
    <source>
        <strain>DSM 12029 / CIP 104789 / BI429</strain>
    </source>
</reference>
<comment type="function">
    <text evidence="3">Plays a role in sucrose synthesis by catalyzing the first step of sucrose biosynthesis from UDP-glucose and fructose-6-phosphate.</text>
</comment>
<comment type="catalytic activity">
    <reaction>
        <text>beta-D-fructose 6-phosphate + UDP-alpha-D-glucose = sucrose 6(F)-phosphate + UDP + H(+)</text>
        <dbReference type="Rhea" id="RHEA:22172"/>
        <dbReference type="ChEBI" id="CHEBI:15378"/>
        <dbReference type="ChEBI" id="CHEBI:57634"/>
        <dbReference type="ChEBI" id="CHEBI:57723"/>
        <dbReference type="ChEBI" id="CHEBI:58223"/>
        <dbReference type="ChEBI" id="CHEBI:58885"/>
        <dbReference type="EC" id="2.4.1.14"/>
    </reaction>
</comment>
<comment type="similarity">
    <text evidence="2">Belongs to the glycosyltransferase 1 family.</text>
</comment>
<proteinExistence type="inferred from homology"/>
<feature type="chain" id="PRO_0000442260" description="Probable sucrose-phosphate synthase">
    <location>
        <begin position="1"/>
        <end position="423"/>
    </location>
</feature>